<proteinExistence type="inferred from homology"/>
<name>EFTU_LEPBL</name>
<sequence length="401" mass="43596">MAKEKFDRSKPHLNVGTIGHVDHGKTTLTAAITTTLAKAIGGKNKAVAYDQIDNAPEEKARGITIATSHQEYETNNRHYAHVDCPGHADYVKNMITGAAQMDAAILVVSATDGPMPQTKEHILLARQVGVPYVIVFINKADMLAADERAEMIEMVEMDVRDLLNKYNFPGDTTPIVYGSAVKALEGDESEIGAPAILKLMEALDTFVPNPKRVTDKPFLMPVEDVFSITGRGTVATGRVEQGVLKVNDEVEIIGIRPTTKTVVTGIEMFRKLLDQAEAGDNIGALLRGTKKEDIERGQVLAKPGSITPHKKFAAEVYVLTKDEGGRHTPFINNYRPQFYFRTTDVTGVCNLPNGVEMVMPGDNVSLTVELISPIAMDKGLKFAIREGGRTIGSGVVVDIIE</sequence>
<dbReference type="EC" id="3.6.5.3" evidence="2"/>
<dbReference type="EMBL" id="CP000348">
    <property type="protein sequence ID" value="ABJ78009.1"/>
    <property type="molecule type" value="Genomic_DNA"/>
</dbReference>
<dbReference type="EMBL" id="CP000348">
    <property type="protein sequence ID" value="ABJ78049.1"/>
    <property type="molecule type" value="Genomic_DNA"/>
</dbReference>
<dbReference type="SMR" id="Q055E6"/>
<dbReference type="KEGG" id="lbl:LBL_0411"/>
<dbReference type="KEGG" id="lbl:LBL_0451"/>
<dbReference type="PATRIC" id="fig|355276.3.peg.557"/>
<dbReference type="HOGENOM" id="CLU_007265_0_2_12"/>
<dbReference type="GO" id="GO:0005829">
    <property type="term" value="C:cytosol"/>
    <property type="evidence" value="ECO:0007669"/>
    <property type="project" value="TreeGrafter"/>
</dbReference>
<dbReference type="GO" id="GO:0005525">
    <property type="term" value="F:GTP binding"/>
    <property type="evidence" value="ECO:0007669"/>
    <property type="project" value="UniProtKB-UniRule"/>
</dbReference>
<dbReference type="GO" id="GO:0003924">
    <property type="term" value="F:GTPase activity"/>
    <property type="evidence" value="ECO:0007669"/>
    <property type="project" value="InterPro"/>
</dbReference>
<dbReference type="GO" id="GO:0003746">
    <property type="term" value="F:translation elongation factor activity"/>
    <property type="evidence" value="ECO:0007669"/>
    <property type="project" value="UniProtKB-UniRule"/>
</dbReference>
<dbReference type="CDD" id="cd01884">
    <property type="entry name" value="EF_Tu"/>
    <property type="match status" value="1"/>
</dbReference>
<dbReference type="CDD" id="cd03697">
    <property type="entry name" value="EFTU_II"/>
    <property type="match status" value="1"/>
</dbReference>
<dbReference type="CDD" id="cd03707">
    <property type="entry name" value="EFTU_III"/>
    <property type="match status" value="1"/>
</dbReference>
<dbReference type="FunFam" id="2.40.30.10:FF:000001">
    <property type="entry name" value="Elongation factor Tu"/>
    <property type="match status" value="1"/>
</dbReference>
<dbReference type="FunFam" id="3.40.50.300:FF:000003">
    <property type="entry name" value="Elongation factor Tu"/>
    <property type="match status" value="1"/>
</dbReference>
<dbReference type="Gene3D" id="3.40.50.300">
    <property type="entry name" value="P-loop containing nucleotide triphosphate hydrolases"/>
    <property type="match status" value="1"/>
</dbReference>
<dbReference type="Gene3D" id="2.40.30.10">
    <property type="entry name" value="Translation factors"/>
    <property type="match status" value="2"/>
</dbReference>
<dbReference type="HAMAP" id="MF_00118_B">
    <property type="entry name" value="EF_Tu_B"/>
    <property type="match status" value="1"/>
</dbReference>
<dbReference type="InterPro" id="IPR041709">
    <property type="entry name" value="EF-Tu_GTP-bd"/>
</dbReference>
<dbReference type="InterPro" id="IPR050055">
    <property type="entry name" value="EF-Tu_GTPase"/>
</dbReference>
<dbReference type="InterPro" id="IPR004161">
    <property type="entry name" value="EFTu-like_2"/>
</dbReference>
<dbReference type="InterPro" id="IPR033720">
    <property type="entry name" value="EFTU_2"/>
</dbReference>
<dbReference type="InterPro" id="IPR031157">
    <property type="entry name" value="G_TR_CS"/>
</dbReference>
<dbReference type="InterPro" id="IPR027417">
    <property type="entry name" value="P-loop_NTPase"/>
</dbReference>
<dbReference type="InterPro" id="IPR005225">
    <property type="entry name" value="Small_GTP-bd"/>
</dbReference>
<dbReference type="InterPro" id="IPR000795">
    <property type="entry name" value="T_Tr_GTP-bd_dom"/>
</dbReference>
<dbReference type="InterPro" id="IPR009000">
    <property type="entry name" value="Transl_B-barrel_sf"/>
</dbReference>
<dbReference type="InterPro" id="IPR009001">
    <property type="entry name" value="Transl_elong_EF1A/Init_IF2_C"/>
</dbReference>
<dbReference type="InterPro" id="IPR004541">
    <property type="entry name" value="Transl_elong_EFTu/EF1A_bac/org"/>
</dbReference>
<dbReference type="InterPro" id="IPR004160">
    <property type="entry name" value="Transl_elong_EFTu/EF1A_C"/>
</dbReference>
<dbReference type="NCBIfam" id="TIGR00485">
    <property type="entry name" value="EF-Tu"/>
    <property type="match status" value="1"/>
</dbReference>
<dbReference type="NCBIfam" id="NF000766">
    <property type="entry name" value="PRK00049.1"/>
    <property type="match status" value="1"/>
</dbReference>
<dbReference type="NCBIfam" id="NF009372">
    <property type="entry name" value="PRK12735.1"/>
    <property type="match status" value="1"/>
</dbReference>
<dbReference type="NCBIfam" id="NF009373">
    <property type="entry name" value="PRK12736.1"/>
    <property type="match status" value="1"/>
</dbReference>
<dbReference type="NCBIfam" id="TIGR00231">
    <property type="entry name" value="small_GTP"/>
    <property type="match status" value="1"/>
</dbReference>
<dbReference type="PANTHER" id="PTHR43721:SF22">
    <property type="entry name" value="ELONGATION FACTOR TU, MITOCHONDRIAL"/>
    <property type="match status" value="1"/>
</dbReference>
<dbReference type="PANTHER" id="PTHR43721">
    <property type="entry name" value="ELONGATION FACTOR TU-RELATED"/>
    <property type="match status" value="1"/>
</dbReference>
<dbReference type="Pfam" id="PF00009">
    <property type="entry name" value="GTP_EFTU"/>
    <property type="match status" value="1"/>
</dbReference>
<dbReference type="Pfam" id="PF03144">
    <property type="entry name" value="GTP_EFTU_D2"/>
    <property type="match status" value="1"/>
</dbReference>
<dbReference type="Pfam" id="PF03143">
    <property type="entry name" value="GTP_EFTU_D3"/>
    <property type="match status" value="1"/>
</dbReference>
<dbReference type="PRINTS" id="PR00315">
    <property type="entry name" value="ELONGATNFCT"/>
</dbReference>
<dbReference type="SUPFAM" id="SSF50465">
    <property type="entry name" value="EF-Tu/eEF-1alpha/eIF2-gamma C-terminal domain"/>
    <property type="match status" value="1"/>
</dbReference>
<dbReference type="SUPFAM" id="SSF52540">
    <property type="entry name" value="P-loop containing nucleoside triphosphate hydrolases"/>
    <property type="match status" value="1"/>
</dbReference>
<dbReference type="SUPFAM" id="SSF50447">
    <property type="entry name" value="Translation proteins"/>
    <property type="match status" value="1"/>
</dbReference>
<dbReference type="PROSITE" id="PS00301">
    <property type="entry name" value="G_TR_1"/>
    <property type="match status" value="1"/>
</dbReference>
<dbReference type="PROSITE" id="PS51722">
    <property type="entry name" value="G_TR_2"/>
    <property type="match status" value="1"/>
</dbReference>
<gene>
    <name evidence="2" type="primary">tuf1</name>
    <name type="synonym">tufB</name>
    <name type="ordered locus">LBL_0411</name>
</gene>
<gene>
    <name evidence="2" type="primary">tuf2</name>
    <name type="synonym">tufB-1</name>
    <name type="ordered locus">LBL_0451</name>
</gene>
<feature type="chain" id="PRO_0000337425" description="Elongation factor Tu">
    <location>
        <begin position="1"/>
        <end position="401"/>
    </location>
</feature>
<feature type="domain" description="tr-type G">
    <location>
        <begin position="10"/>
        <end position="211"/>
    </location>
</feature>
<feature type="region of interest" description="G1" evidence="1">
    <location>
        <begin position="19"/>
        <end position="26"/>
    </location>
</feature>
<feature type="region of interest" description="G2" evidence="1">
    <location>
        <begin position="62"/>
        <end position="66"/>
    </location>
</feature>
<feature type="region of interest" description="G3" evidence="1">
    <location>
        <begin position="83"/>
        <end position="86"/>
    </location>
</feature>
<feature type="region of interest" description="G4" evidence="1">
    <location>
        <begin position="138"/>
        <end position="141"/>
    </location>
</feature>
<feature type="region of interest" description="G5" evidence="1">
    <location>
        <begin position="179"/>
        <end position="181"/>
    </location>
</feature>
<feature type="binding site" evidence="2">
    <location>
        <begin position="19"/>
        <end position="26"/>
    </location>
    <ligand>
        <name>GTP</name>
        <dbReference type="ChEBI" id="CHEBI:37565"/>
    </ligand>
</feature>
<feature type="binding site" evidence="2">
    <location>
        <position position="26"/>
    </location>
    <ligand>
        <name>Mg(2+)</name>
        <dbReference type="ChEBI" id="CHEBI:18420"/>
    </ligand>
</feature>
<feature type="binding site" evidence="2">
    <location>
        <begin position="83"/>
        <end position="87"/>
    </location>
    <ligand>
        <name>GTP</name>
        <dbReference type="ChEBI" id="CHEBI:37565"/>
    </ligand>
</feature>
<feature type="binding site" evidence="2">
    <location>
        <begin position="138"/>
        <end position="141"/>
    </location>
    <ligand>
        <name>GTP</name>
        <dbReference type="ChEBI" id="CHEBI:37565"/>
    </ligand>
</feature>
<protein>
    <recommendedName>
        <fullName evidence="2">Elongation factor Tu</fullName>
        <shortName evidence="2">EF-Tu</shortName>
        <ecNumber evidence="2">3.6.5.3</ecNumber>
    </recommendedName>
</protein>
<evidence type="ECO:0000250" key="1"/>
<evidence type="ECO:0000255" key="2">
    <source>
        <dbReference type="HAMAP-Rule" id="MF_00118"/>
    </source>
</evidence>
<reference key="1">
    <citation type="journal article" date="2006" name="Proc. Natl. Acad. Sci. U.S.A.">
        <title>Genome reduction in Leptospira borgpetersenii reflects limited transmission potential.</title>
        <authorList>
            <person name="Bulach D.M."/>
            <person name="Zuerner R.L."/>
            <person name="Wilson P."/>
            <person name="Seemann T."/>
            <person name="McGrath A."/>
            <person name="Cullen P.A."/>
            <person name="Davis J."/>
            <person name="Johnson M."/>
            <person name="Kuczek E."/>
            <person name="Alt D.P."/>
            <person name="Peterson-Burch B."/>
            <person name="Coppel R.L."/>
            <person name="Rood J.I."/>
            <person name="Davies J.K."/>
            <person name="Adler B."/>
        </authorList>
    </citation>
    <scope>NUCLEOTIDE SEQUENCE [LARGE SCALE GENOMIC DNA]</scope>
    <source>
        <strain>L550</strain>
    </source>
</reference>
<organism>
    <name type="scientific">Leptospira borgpetersenii serovar Hardjo-bovis (strain L550)</name>
    <dbReference type="NCBI Taxonomy" id="355276"/>
    <lineage>
        <taxon>Bacteria</taxon>
        <taxon>Pseudomonadati</taxon>
        <taxon>Spirochaetota</taxon>
        <taxon>Spirochaetia</taxon>
        <taxon>Leptospirales</taxon>
        <taxon>Leptospiraceae</taxon>
        <taxon>Leptospira</taxon>
    </lineage>
</organism>
<comment type="function">
    <text evidence="2">GTP hydrolase that promotes the GTP-dependent binding of aminoacyl-tRNA to the A-site of ribosomes during protein biosynthesis.</text>
</comment>
<comment type="catalytic activity">
    <reaction evidence="2">
        <text>GTP + H2O = GDP + phosphate + H(+)</text>
        <dbReference type="Rhea" id="RHEA:19669"/>
        <dbReference type="ChEBI" id="CHEBI:15377"/>
        <dbReference type="ChEBI" id="CHEBI:15378"/>
        <dbReference type="ChEBI" id="CHEBI:37565"/>
        <dbReference type="ChEBI" id="CHEBI:43474"/>
        <dbReference type="ChEBI" id="CHEBI:58189"/>
        <dbReference type="EC" id="3.6.5.3"/>
    </reaction>
    <physiologicalReaction direction="left-to-right" evidence="2">
        <dbReference type="Rhea" id="RHEA:19670"/>
    </physiologicalReaction>
</comment>
<comment type="subunit">
    <text evidence="2">Monomer.</text>
</comment>
<comment type="subcellular location">
    <subcellularLocation>
        <location evidence="2">Cytoplasm</location>
    </subcellularLocation>
</comment>
<comment type="similarity">
    <text evidence="2">Belongs to the TRAFAC class translation factor GTPase superfamily. Classic translation factor GTPase family. EF-Tu/EF-1A subfamily.</text>
</comment>
<keyword id="KW-0963">Cytoplasm</keyword>
<keyword id="KW-0251">Elongation factor</keyword>
<keyword id="KW-0342">GTP-binding</keyword>
<keyword id="KW-0378">Hydrolase</keyword>
<keyword id="KW-0460">Magnesium</keyword>
<keyword id="KW-0479">Metal-binding</keyword>
<keyword id="KW-0547">Nucleotide-binding</keyword>
<keyword id="KW-0648">Protein biosynthesis</keyword>
<accession>Q055E6</accession>